<feature type="chain" id="PRO_0000174200" description="Small ribosomal subunit protein eS7">
    <location>
        <begin position="1"/>
        <end position="194"/>
    </location>
</feature>
<gene>
    <name type="primary">RpS7</name>
    <name type="ORF">CG1883</name>
</gene>
<organism>
    <name type="scientific">Drosophila melanogaster</name>
    <name type="common">Fruit fly</name>
    <dbReference type="NCBI Taxonomy" id="7227"/>
    <lineage>
        <taxon>Eukaryota</taxon>
        <taxon>Metazoa</taxon>
        <taxon>Ecdysozoa</taxon>
        <taxon>Arthropoda</taxon>
        <taxon>Hexapoda</taxon>
        <taxon>Insecta</taxon>
        <taxon>Pterygota</taxon>
        <taxon>Neoptera</taxon>
        <taxon>Endopterygota</taxon>
        <taxon>Diptera</taxon>
        <taxon>Brachycera</taxon>
        <taxon>Muscomorpha</taxon>
        <taxon>Ephydroidea</taxon>
        <taxon>Drosophilidae</taxon>
        <taxon>Drosophila</taxon>
        <taxon>Sophophora</taxon>
    </lineage>
</organism>
<evidence type="ECO:0000305" key="1"/>
<accession>Q9VA91</accession>
<accession>A4V3N0</accession>
<reference key="1">
    <citation type="journal article" date="2000" name="Science">
        <title>The genome sequence of Drosophila melanogaster.</title>
        <authorList>
            <person name="Adams M.D."/>
            <person name="Celniker S.E."/>
            <person name="Holt R.A."/>
            <person name="Evans C.A."/>
            <person name="Gocayne J.D."/>
            <person name="Amanatides P.G."/>
            <person name="Scherer S.E."/>
            <person name="Li P.W."/>
            <person name="Hoskins R.A."/>
            <person name="Galle R.F."/>
            <person name="George R.A."/>
            <person name="Lewis S.E."/>
            <person name="Richards S."/>
            <person name="Ashburner M."/>
            <person name="Henderson S.N."/>
            <person name="Sutton G.G."/>
            <person name="Wortman J.R."/>
            <person name="Yandell M.D."/>
            <person name="Zhang Q."/>
            <person name="Chen L.X."/>
            <person name="Brandon R.C."/>
            <person name="Rogers Y.-H.C."/>
            <person name="Blazej R.G."/>
            <person name="Champe M."/>
            <person name="Pfeiffer B.D."/>
            <person name="Wan K.H."/>
            <person name="Doyle C."/>
            <person name="Baxter E.G."/>
            <person name="Helt G."/>
            <person name="Nelson C.R."/>
            <person name="Miklos G.L.G."/>
            <person name="Abril J.F."/>
            <person name="Agbayani A."/>
            <person name="An H.-J."/>
            <person name="Andrews-Pfannkoch C."/>
            <person name="Baldwin D."/>
            <person name="Ballew R.M."/>
            <person name="Basu A."/>
            <person name="Baxendale J."/>
            <person name="Bayraktaroglu L."/>
            <person name="Beasley E.M."/>
            <person name="Beeson K.Y."/>
            <person name="Benos P.V."/>
            <person name="Berman B.P."/>
            <person name="Bhandari D."/>
            <person name="Bolshakov S."/>
            <person name="Borkova D."/>
            <person name="Botchan M.R."/>
            <person name="Bouck J."/>
            <person name="Brokstein P."/>
            <person name="Brottier P."/>
            <person name="Burtis K.C."/>
            <person name="Busam D.A."/>
            <person name="Butler H."/>
            <person name="Cadieu E."/>
            <person name="Center A."/>
            <person name="Chandra I."/>
            <person name="Cherry J.M."/>
            <person name="Cawley S."/>
            <person name="Dahlke C."/>
            <person name="Davenport L.B."/>
            <person name="Davies P."/>
            <person name="de Pablos B."/>
            <person name="Delcher A."/>
            <person name="Deng Z."/>
            <person name="Mays A.D."/>
            <person name="Dew I."/>
            <person name="Dietz S.M."/>
            <person name="Dodson K."/>
            <person name="Doup L.E."/>
            <person name="Downes M."/>
            <person name="Dugan-Rocha S."/>
            <person name="Dunkov B.C."/>
            <person name="Dunn P."/>
            <person name="Durbin K.J."/>
            <person name="Evangelista C.C."/>
            <person name="Ferraz C."/>
            <person name="Ferriera S."/>
            <person name="Fleischmann W."/>
            <person name="Fosler C."/>
            <person name="Gabrielian A.E."/>
            <person name="Garg N.S."/>
            <person name="Gelbart W.M."/>
            <person name="Glasser K."/>
            <person name="Glodek A."/>
            <person name="Gong F."/>
            <person name="Gorrell J.H."/>
            <person name="Gu Z."/>
            <person name="Guan P."/>
            <person name="Harris M."/>
            <person name="Harris N.L."/>
            <person name="Harvey D.A."/>
            <person name="Heiman T.J."/>
            <person name="Hernandez J.R."/>
            <person name="Houck J."/>
            <person name="Hostin D."/>
            <person name="Houston K.A."/>
            <person name="Howland T.J."/>
            <person name="Wei M.-H."/>
            <person name="Ibegwam C."/>
            <person name="Jalali M."/>
            <person name="Kalush F."/>
            <person name="Karpen G.H."/>
            <person name="Ke Z."/>
            <person name="Kennison J.A."/>
            <person name="Ketchum K.A."/>
            <person name="Kimmel B.E."/>
            <person name="Kodira C.D."/>
            <person name="Kraft C.L."/>
            <person name="Kravitz S."/>
            <person name="Kulp D."/>
            <person name="Lai Z."/>
            <person name="Lasko P."/>
            <person name="Lei Y."/>
            <person name="Levitsky A.A."/>
            <person name="Li J.H."/>
            <person name="Li Z."/>
            <person name="Liang Y."/>
            <person name="Lin X."/>
            <person name="Liu X."/>
            <person name="Mattei B."/>
            <person name="McIntosh T.C."/>
            <person name="McLeod M.P."/>
            <person name="McPherson D."/>
            <person name="Merkulov G."/>
            <person name="Milshina N.V."/>
            <person name="Mobarry C."/>
            <person name="Morris J."/>
            <person name="Moshrefi A."/>
            <person name="Mount S.M."/>
            <person name="Moy M."/>
            <person name="Murphy B."/>
            <person name="Murphy L."/>
            <person name="Muzny D.M."/>
            <person name="Nelson D.L."/>
            <person name="Nelson D.R."/>
            <person name="Nelson K.A."/>
            <person name="Nixon K."/>
            <person name="Nusskern D.R."/>
            <person name="Pacleb J.M."/>
            <person name="Palazzolo M."/>
            <person name="Pittman G.S."/>
            <person name="Pan S."/>
            <person name="Pollard J."/>
            <person name="Puri V."/>
            <person name="Reese M.G."/>
            <person name="Reinert K."/>
            <person name="Remington K."/>
            <person name="Saunders R.D.C."/>
            <person name="Scheeler F."/>
            <person name="Shen H."/>
            <person name="Shue B.C."/>
            <person name="Siden-Kiamos I."/>
            <person name="Simpson M."/>
            <person name="Skupski M.P."/>
            <person name="Smith T.J."/>
            <person name="Spier E."/>
            <person name="Spradling A.C."/>
            <person name="Stapleton M."/>
            <person name="Strong R."/>
            <person name="Sun E."/>
            <person name="Svirskas R."/>
            <person name="Tector C."/>
            <person name="Turner R."/>
            <person name="Venter E."/>
            <person name="Wang A.H."/>
            <person name="Wang X."/>
            <person name="Wang Z.-Y."/>
            <person name="Wassarman D.A."/>
            <person name="Weinstock G.M."/>
            <person name="Weissenbach J."/>
            <person name="Williams S.M."/>
            <person name="Woodage T."/>
            <person name="Worley K.C."/>
            <person name="Wu D."/>
            <person name="Yang S."/>
            <person name="Yao Q.A."/>
            <person name="Ye J."/>
            <person name="Yeh R.-F."/>
            <person name="Zaveri J.S."/>
            <person name="Zhan M."/>
            <person name="Zhang G."/>
            <person name="Zhao Q."/>
            <person name="Zheng L."/>
            <person name="Zheng X.H."/>
            <person name="Zhong F.N."/>
            <person name="Zhong W."/>
            <person name="Zhou X."/>
            <person name="Zhu S.C."/>
            <person name="Zhu X."/>
            <person name="Smith H.O."/>
            <person name="Gibbs R.A."/>
            <person name="Myers E.W."/>
            <person name="Rubin G.M."/>
            <person name="Venter J.C."/>
        </authorList>
    </citation>
    <scope>NUCLEOTIDE SEQUENCE [LARGE SCALE GENOMIC DNA]</scope>
    <source>
        <strain>Berkeley</strain>
    </source>
</reference>
<reference key="2">
    <citation type="journal article" date="2002" name="Genome Biol.">
        <title>Annotation of the Drosophila melanogaster euchromatic genome: a systematic review.</title>
        <authorList>
            <person name="Misra S."/>
            <person name="Crosby M.A."/>
            <person name="Mungall C.J."/>
            <person name="Matthews B.B."/>
            <person name="Campbell K.S."/>
            <person name="Hradecky P."/>
            <person name="Huang Y."/>
            <person name="Kaminker J.S."/>
            <person name="Millburn G.H."/>
            <person name="Prochnik S.E."/>
            <person name="Smith C.D."/>
            <person name="Tupy J.L."/>
            <person name="Whitfield E.J."/>
            <person name="Bayraktaroglu L."/>
            <person name="Berman B.P."/>
            <person name="Bettencourt B.R."/>
            <person name="Celniker S.E."/>
            <person name="de Grey A.D.N.J."/>
            <person name="Drysdale R.A."/>
            <person name="Harris N.L."/>
            <person name="Richter J."/>
            <person name="Russo S."/>
            <person name="Schroeder A.J."/>
            <person name="Shu S.Q."/>
            <person name="Stapleton M."/>
            <person name="Yamada C."/>
            <person name="Ashburner M."/>
            <person name="Gelbart W.M."/>
            <person name="Rubin G.M."/>
            <person name="Lewis S.E."/>
        </authorList>
    </citation>
    <scope>GENOME REANNOTATION</scope>
    <source>
        <strain>Berkeley</strain>
    </source>
</reference>
<reference key="3">
    <citation type="journal article" date="2002" name="Genome Biol.">
        <title>A Drosophila full-length cDNA resource.</title>
        <authorList>
            <person name="Stapleton M."/>
            <person name="Carlson J.W."/>
            <person name="Brokstein P."/>
            <person name="Yu C."/>
            <person name="Champe M."/>
            <person name="George R.A."/>
            <person name="Guarin H."/>
            <person name="Kronmiller B."/>
            <person name="Pacleb J.M."/>
            <person name="Park S."/>
            <person name="Wan K.H."/>
            <person name="Rubin G.M."/>
            <person name="Celniker S.E."/>
        </authorList>
    </citation>
    <scope>NUCLEOTIDE SEQUENCE [LARGE SCALE MRNA]</scope>
    <source>
        <strain>Berkeley</strain>
        <tissue>Embryo</tissue>
    </source>
</reference>
<reference key="4">
    <citation type="journal article" date="2013" name="Nature">
        <title>Structures of the human and Drosophila 80S ribosome.</title>
        <authorList>
            <person name="Anger A.M."/>
            <person name="Armache J.P."/>
            <person name="Berninghausen O."/>
            <person name="Habeck M."/>
            <person name="Subklewe M."/>
            <person name="Wilson D.N."/>
            <person name="Beckmann R."/>
        </authorList>
    </citation>
    <scope>STRUCTURE BY ELECTRON MICROSCOPY (6.0 ANGSTROMS) OF THE 80S RIBOSOME</scope>
</reference>
<sequence>MAIGSKIIKPGGSDPDDFEKSIAQALVELEANSDLKPYLRDLHITRAREIEFGSKKAVIIYVPIPQQKVFQKIQIILVRELEKKFSGKHVVVIAERKILPKPTRKARNPLKQKRPRSRTLTAVYDAILEDLVFPAEIVGKRIRVKLDGSQLVKVHLDKNQQTTIEHKVDTFTSVYKKLTGRDVTFEFPDNYLNV</sequence>
<keyword id="KW-0002">3D-structure</keyword>
<keyword id="KW-1185">Reference proteome</keyword>
<keyword id="KW-0687">Ribonucleoprotein</keyword>
<keyword id="KW-0689">Ribosomal protein</keyword>
<dbReference type="EMBL" id="AE014297">
    <property type="protein sequence ID" value="AAF57023.1"/>
    <property type="molecule type" value="Genomic_DNA"/>
</dbReference>
<dbReference type="EMBL" id="AE014297">
    <property type="protein sequence ID" value="AAN14224.1"/>
    <property type="molecule type" value="Genomic_DNA"/>
</dbReference>
<dbReference type="EMBL" id="AE014297">
    <property type="protein sequence ID" value="AAS65232.1"/>
    <property type="molecule type" value="Genomic_DNA"/>
</dbReference>
<dbReference type="EMBL" id="AY071156">
    <property type="protein sequence ID" value="AAL48778.1"/>
    <property type="molecule type" value="mRNA"/>
</dbReference>
<dbReference type="RefSeq" id="NP_651782.1">
    <property type="nucleotide sequence ID" value="NM_143525.4"/>
</dbReference>
<dbReference type="RefSeq" id="NP_733355.1">
    <property type="nucleotide sequence ID" value="NM_170476.2"/>
</dbReference>
<dbReference type="RefSeq" id="NP_733356.2">
    <property type="nucleotide sequence ID" value="NM_170477.3"/>
</dbReference>
<dbReference type="RefSeq" id="NP_996312.1">
    <property type="nucleotide sequence ID" value="NM_206589.2"/>
</dbReference>
<dbReference type="PDB" id="4V6W">
    <property type="method" value="EM"/>
    <property type="resolution" value="6.00 A"/>
    <property type="chains" value="AH=1-194"/>
</dbReference>
<dbReference type="PDB" id="6XU6">
    <property type="method" value="EM"/>
    <property type="resolution" value="3.50 A"/>
    <property type="chains" value="AH=1-194"/>
</dbReference>
<dbReference type="PDB" id="6XU7">
    <property type="method" value="EM"/>
    <property type="resolution" value="4.90 A"/>
    <property type="chains" value="AH=1-194"/>
</dbReference>
<dbReference type="PDB" id="6XU8">
    <property type="method" value="EM"/>
    <property type="resolution" value="3.00 A"/>
    <property type="chains" value="AH=1-194"/>
</dbReference>
<dbReference type="PDBsum" id="4V6W"/>
<dbReference type="PDBsum" id="6XU6"/>
<dbReference type="PDBsum" id="6XU7"/>
<dbReference type="PDBsum" id="6XU8"/>
<dbReference type="EMDB" id="EMD-10622"/>
<dbReference type="EMDB" id="EMD-10623"/>
<dbReference type="EMDB" id="EMD-10624"/>
<dbReference type="SMR" id="Q9VA91"/>
<dbReference type="BioGRID" id="68450">
    <property type="interactions" value="137"/>
</dbReference>
<dbReference type="FunCoup" id="Q9VA91">
    <property type="interactions" value="1907"/>
</dbReference>
<dbReference type="IntAct" id="Q9VA91">
    <property type="interactions" value="2"/>
</dbReference>
<dbReference type="MINT" id="Q9VA91"/>
<dbReference type="STRING" id="7227.FBpp0088440"/>
<dbReference type="PaxDb" id="7227-FBpp0088441"/>
<dbReference type="DNASU" id="43594"/>
<dbReference type="EnsemblMetazoa" id="FBtr0089422">
    <property type="protein sequence ID" value="FBpp0088439"/>
    <property type="gene ID" value="FBgn0039757"/>
</dbReference>
<dbReference type="EnsemblMetazoa" id="FBtr0089423">
    <property type="protein sequence ID" value="FBpp0088440"/>
    <property type="gene ID" value="FBgn0039757"/>
</dbReference>
<dbReference type="EnsemblMetazoa" id="FBtr0089425">
    <property type="protein sequence ID" value="FBpp0088970"/>
    <property type="gene ID" value="FBgn0039757"/>
</dbReference>
<dbReference type="EnsemblMetazoa" id="FBtr0339183">
    <property type="protein sequence ID" value="FBpp0308324"/>
    <property type="gene ID" value="FBgn0039757"/>
</dbReference>
<dbReference type="GeneID" id="43594"/>
<dbReference type="KEGG" id="dme:Dmel_CG1883"/>
<dbReference type="AGR" id="FB:FBgn0039757"/>
<dbReference type="CTD" id="6201"/>
<dbReference type="FlyBase" id="FBgn0039757">
    <property type="gene designation" value="RpS7"/>
</dbReference>
<dbReference type="VEuPathDB" id="VectorBase:FBgn0039757"/>
<dbReference type="eggNOG" id="KOG3320">
    <property type="taxonomic scope" value="Eukaryota"/>
</dbReference>
<dbReference type="GeneTree" id="ENSGT00390000014122"/>
<dbReference type="HOGENOM" id="CLU_088621_1_2_1"/>
<dbReference type="InParanoid" id="Q9VA91"/>
<dbReference type="OMA" id="AAYHKVQ"/>
<dbReference type="OrthoDB" id="1724687at2759"/>
<dbReference type="PhylomeDB" id="Q9VA91"/>
<dbReference type="Reactome" id="R-DME-156827">
    <property type="pathway name" value="L13a-mediated translational silencing of Ceruloplasmin expression"/>
</dbReference>
<dbReference type="Reactome" id="R-DME-1799339">
    <property type="pathway name" value="SRP-dependent cotranslational protein targeting to membrane"/>
</dbReference>
<dbReference type="Reactome" id="R-DME-6791226">
    <property type="pathway name" value="Major pathway of rRNA processing in the nucleolus and cytosol"/>
</dbReference>
<dbReference type="Reactome" id="R-DME-72649">
    <property type="pathway name" value="Translation initiation complex formation"/>
</dbReference>
<dbReference type="Reactome" id="R-DME-72689">
    <property type="pathway name" value="Formation of a pool of free 40S subunits"/>
</dbReference>
<dbReference type="Reactome" id="R-DME-72695">
    <property type="pathway name" value="Formation of the ternary complex, and subsequently, the 43S complex"/>
</dbReference>
<dbReference type="Reactome" id="R-DME-72702">
    <property type="pathway name" value="Ribosomal scanning and start codon recognition"/>
</dbReference>
<dbReference type="Reactome" id="R-DME-72706">
    <property type="pathway name" value="GTP hydrolysis and joining of the 60S ribosomal subunit"/>
</dbReference>
<dbReference type="Reactome" id="R-DME-975956">
    <property type="pathway name" value="Nonsense Mediated Decay (NMD) independent of the Exon Junction Complex (EJC)"/>
</dbReference>
<dbReference type="Reactome" id="R-DME-975957">
    <property type="pathway name" value="Nonsense Mediated Decay (NMD) enhanced by the Exon Junction Complex (EJC)"/>
</dbReference>
<dbReference type="SignaLink" id="Q9VA91"/>
<dbReference type="BioGRID-ORCS" id="43594">
    <property type="hits" value="0 hits in 1 CRISPR screen"/>
</dbReference>
<dbReference type="ChiTaRS" id="RpS7">
    <property type="organism name" value="fly"/>
</dbReference>
<dbReference type="GenomeRNAi" id="43594"/>
<dbReference type="PRO" id="PR:Q9VA91"/>
<dbReference type="Proteomes" id="UP000000803">
    <property type="component" value="Chromosome 3R"/>
</dbReference>
<dbReference type="Bgee" id="FBgn0039757">
    <property type="expression patterns" value="Expressed in adult enteroendocrine precursor cell in adult midgut (Drosophila) and 280 other cell types or tissues"/>
</dbReference>
<dbReference type="ExpressionAtlas" id="Q9VA91">
    <property type="expression patterns" value="baseline and differential"/>
</dbReference>
<dbReference type="GO" id="GO:0022626">
    <property type="term" value="C:cytosolic ribosome"/>
    <property type="evidence" value="ECO:0000314"/>
    <property type="project" value="FlyBase"/>
</dbReference>
<dbReference type="GO" id="GO:0022627">
    <property type="term" value="C:cytosolic small ribosomal subunit"/>
    <property type="evidence" value="ECO:0000318"/>
    <property type="project" value="GO_Central"/>
</dbReference>
<dbReference type="GO" id="GO:0005634">
    <property type="term" value="C:nucleus"/>
    <property type="evidence" value="ECO:0007005"/>
    <property type="project" value="FlyBase"/>
</dbReference>
<dbReference type="GO" id="GO:0032040">
    <property type="term" value="C:small-subunit processome"/>
    <property type="evidence" value="ECO:0000318"/>
    <property type="project" value="GO_Central"/>
</dbReference>
<dbReference type="GO" id="GO:0003735">
    <property type="term" value="F:structural constituent of ribosome"/>
    <property type="evidence" value="ECO:0000314"/>
    <property type="project" value="FlyBase"/>
</dbReference>
<dbReference type="GO" id="GO:0002181">
    <property type="term" value="P:cytoplasmic translation"/>
    <property type="evidence" value="ECO:0000304"/>
    <property type="project" value="FlyBase"/>
</dbReference>
<dbReference type="GO" id="GO:0042274">
    <property type="term" value="P:ribosomal small subunit biogenesis"/>
    <property type="evidence" value="ECO:0000318"/>
    <property type="project" value="GO_Central"/>
</dbReference>
<dbReference type="GO" id="GO:0006364">
    <property type="term" value="P:rRNA processing"/>
    <property type="evidence" value="ECO:0000318"/>
    <property type="project" value="GO_Central"/>
</dbReference>
<dbReference type="InterPro" id="IPR000554">
    <property type="entry name" value="Ribosomal_eS7"/>
</dbReference>
<dbReference type="InterPro" id="IPR047861">
    <property type="entry name" value="Ribosomal_eS7_CS"/>
</dbReference>
<dbReference type="PANTHER" id="PTHR11278">
    <property type="entry name" value="40S RIBOSOMAL PROTEIN S7"/>
    <property type="match status" value="1"/>
</dbReference>
<dbReference type="PANTHER" id="PTHR11278:SF0">
    <property type="entry name" value="SMALL RIBOSOMAL SUBUNIT PROTEIN ES7"/>
    <property type="match status" value="1"/>
</dbReference>
<dbReference type="Pfam" id="PF01251">
    <property type="entry name" value="Ribosomal_S7e"/>
    <property type="match status" value="1"/>
</dbReference>
<dbReference type="PROSITE" id="PS00948">
    <property type="entry name" value="RIBOSOMAL_S7E"/>
    <property type="match status" value="1"/>
</dbReference>
<comment type="similarity">
    <text evidence="1">Belongs to the eukaryotic ribosomal protein eS7 family.</text>
</comment>
<proteinExistence type="evidence at protein level"/>
<name>RS7_DROME</name>
<protein>
    <recommendedName>
        <fullName evidence="1">Small ribosomal subunit protein eS7</fullName>
    </recommendedName>
    <alternativeName>
        <fullName>40S ribosomal protein S7</fullName>
    </alternativeName>
</protein>